<comment type="subcellular location">
    <subcellularLocation>
        <location evidence="1">Secreted</location>
    </subcellularLocation>
</comment>
<comment type="tissue specificity">
    <text>Expressed by the venom duct.</text>
</comment>
<comment type="domain">
    <text>The cysteine framework is VIII (C-C-C-C-C-C-C-C-C-C).</text>
</comment>
<comment type="PTM">
    <text evidence="3">Contains 5 disulfide bonds.</text>
</comment>
<comment type="similarity">
    <text evidence="3">Belongs to the conotoxin S superfamily.</text>
</comment>
<organism>
    <name type="scientific">Conus caracteristicus</name>
    <name type="common">Characteristic cone</name>
    <dbReference type="NCBI Taxonomy" id="89440"/>
    <lineage>
        <taxon>Eukaryota</taxon>
        <taxon>Metazoa</taxon>
        <taxon>Spiralia</taxon>
        <taxon>Lophotrochozoa</taxon>
        <taxon>Mollusca</taxon>
        <taxon>Gastropoda</taxon>
        <taxon>Caenogastropoda</taxon>
        <taxon>Neogastropoda</taxon>
        <taxon>Conoidea</taxon>
        <taxon>Conidae</taxon>
        <taxon>Conus</taxon>
    </lineage>
</organism>
<reference key="1">
    <citation type="journal article" date="2008" name="Toxicon">
        <title>Identification of a novel S-superfamily conotoxin from vermivorous Conus caracteristicus.</title>
        <authorList>
            <person name="Liu L."/>
            <person name="Wu X."/>
            <person name="Yuan D."/>
            <person name="Chi C."/>
            <person name="Wang C."/>
        </authorList>
    </citation>
    <scope>NUCLEOTIDE SEQUENCE [MRNA]</scope>
    <source>
        <tissue>Venom duct</tissue>
    </source>
</reference>
<keyword id="KW-1015">Disulfide bond</keyword>
<keyword id="KW-0528">Neurotoxin</keyword>
<keyword id="KW-0964">Secreted</keyword>
<keyword id="KW-0732">Signal</keyword>
<keyword id="KW-0800">Toxin</keyword>
<dbReference type="EMBL" id="EU516351">
    <property type="protein sequence ID" value="ACB45451.1"/>
    <property type="molecule type" value="mRNA"/>
</dbReference>
<dbReference type="ConoServer" id="2827">
    <property type="toxin name" value="Ca8c precursor"/>
</dbReference>
<dbReference type="GO" id="GO:0005576">
    <property type="term" value="C:extracellular region"/>
    <property type="evidence" value="ECO:0007669"/>
    <property type="project" value="UniProtKB-SubCell"/>
</dbReference>
<dbReference type="GO" id="GO:0090729">
    <property type="term" value="F:toxin activity"/>
    <property type="evidence" value="ECO:0007669"/>
    <property type="project" value="UniProtKB-KW"/>
</dbReference>
<name>CS83_CONCB</name>
<sequence>MMLKMGAMFVLLLLFILPSSQQEGDVQARKTHLKSGFYGTLAMSTRGCSGTCRRHRDGKCRGTCECSGYSYCRCGDAHHFYRGCTCTC</sequence>
<protein>
    <recommendedName>
        <fullName>Conotoxin Ca8.3</fullName>
    </recommendedName>
</protein>
<proteinExistence type="evidence at transcript level"/>
<feature type="signal peptide" evidence="2">
    <location>
        <begin position="1"/>
        <end position="21"/>
    </location>
</feature>
<feature type="propeptide" id="PRO_0000346137" evidence="1">
    <location>
        <begin position="22"/>
        <end position="46"/>
    </location>
</feature>
<feature type="peptide" id="PRO_0000346138" description="Conotoxin Ca8.3">
    <location>
        <begin position="47"/>
        <end position="88"/>
    </location>
</feature>
<accession>B2CJ87</accession>
<evidence type="ECO:0000250" key="1"/>
<evidence type="ECO:0000255" key="2"/>
<evidence type="ECO:0000305" key="3"/>